<reference key="1">
    <citation type="journal article" date="2003" name="Nature">
        <title>Genome sequence of Bacillus cereus and comparative analysis with Bacillus anthracis.</title>
        <authorList>
            <person name="Ivanova N."/>
            <person name="Sorokin A."/>
            <person name="Anderson I."/>
            <person name="Galleron N."/>
            <person name="Candelon B."/>
            <person name="Kapatral V."/>
            <person name="Bhattacharyya A."/>
            <person name="Reznik G."/>
            <person name="Mikhailova N."/>
            <person name="Lapidus A."/>
            <person name="Chu L."/>
            <person name="Mazur M."/>
            <person name="Goltsman E."/>
            <person name="Larsen N."/>
            <person name="D'Souza M."/>
            <person name="Walunas T."/>
            <person name="Grechkin Y."/>
            <person name="Pusch G."/>
            <person name="Haselkorn R."/>
            <person name="Fonstein M."/>
            <person name="Ehrlich S.D."/>
            <person name="Overbeek R."/>
            <person name="Kyrpides N.C."/>
        </authorList>
    </citation>
    <scope>NUCLEOTIDE SEQUENCE [LARGE SCALE GENOMIC DNA]</scope>
    <source>
        <strain>ATCC 14579 / DSM 31 / CCUG 7414 / JCM 2152 / NBRC 15305 / NCIMB 9373 / NCTC 2599 / NRRL B-3711</strain>
    </source>
</reference>
<sequence length="729" mass="82891">MSKSVVIAEKPSVARDIARVLKCDKKGNGYLEGSKYIVTWALGHLVTLADPESYDVKYKKWNLEDLPMLPERLKLTVIKQTGKQFNAVKSQLLRKDVNEIIVATDAGREGELVARWIIDKVKLNKPIKRLWISSVTDKAIKDGFANLKPGKAYDNLYASAVARSEADWYIGLNATRALTTRFNAQLNCGRVQTPTVAMIASREDEIKNFKAQTYYGIEAQTMEKLKLTWQDANGNSRSFNKEKIDGIVKRLDKQNATVVEIDKKQKKSFSPGLYDLTELQRDANKKFGYSAKETLNIMQKLYEQHKVLTYPRTDSRYISSDIVGTLPERLKACGVGEYRPFAHKVLQKPIKPNKSFVDDSKVSDHHAIIPTEGYVNFSAFTDKERKIYDLVVKRFLAVLFPAFEYEQLTLRTKVGNETFIARGKTILHAGWKEVYENRFEDDDVTDDVKEQLLPHIEKGDTLAVKLIMQTSGQTKAPARFNEATLLSAMENPTKYMDTQNKQLADTLKSTGGLGTVATRADIIDKLFNSFLIEKRGKDIHITSKGRQLLDLVPEELKSPTLTGEWEQKLEAIAKGKLKKEVFISEMKNYTKEIVSEIKSSDKKYKHDNISTKSCPDCGKPMLEVNGKKGKMLVCQDRECGHRKNVSRTTNARCPQCKKKLELRGEGAGQIFACKCGYREKLSTFQERRKKESGNKADKRDVQKYMKQQNKEEEPLNNPFAEALKKLKFD</sequence>
<name>TOP3_BACCR</name>
<dbReference type="EC" id="5.6.2.1" evidence="1"/>
<dbReference type="EMBL" id="AE016877">
    <property type="protein sequence ID" value="AAP07457.1"/>
    <property type="molecule type" value="Genomic_DNA"/>
</dbReference>
<dbReference type="RefSeq" id="NP_830256.1">
    <property type="nucleotide sequence ID" value="NC_004722.1"/>
</dbReference>
<dbReference type="RefSeq" id="WP_000047293.1">
    <property type="nucleotide sequence ID" value="NZ_CP138336.1"/>
</dbReference>
<dbReference type="SMR" id="Q81IH1"/>
<dbReference type="STRING" id="226900.BC_0417"/>
<dbReference type="KEGG" id="bce:BC0417"/>
<dbReference type="PATRIC" id="fig|226900.8.peg.387"/>
<dbReference type="HOGENOM" id="CLU_002929_5_2_9"/>
<dbReference type="OrthoDB" id="9803554at2"/>
<dbReference type="BRENDA" id="5.6.2.1">
    <property type="organism ID" value="648"/>
</dbReference>
<dbReference type="Proteomes" id="UP000001417">
    <property type="component" value="Chromosome"/>
</dbReference>
<dbReference type="GO" id="GO:0043597">
    <property type="term" value="C:cytoplasmic replication fork"/>
    <property type="evidence" value="ECO:0000318"/>
    <property type="project" value="GO_Central"/>
</dbReference>
<dbReference type="GO" id="GO:0003677">
    <property type="term" value="F:DNA binding"/>
    <property type="evidence" value="ECO:0007669"/>
    <property type="project" value="UniProtKB-KW"/>
</dbReference>
<dbReference type="GO" id="GO:0003917">
    <property type="term" value="F:DNA topoisomerase type I (single strand cut, ATP-independent) activity"/>
    <property type="evidence" value="ECO:0000318"/>
    <property type="project" value="GO_Central"/>
</dbReference>
<dbReference type="GO" id="GO:0000287">
    <property type="term" value="F:magnesium ion binding"/>
    <property type="evidence" value="ECO:0007669"/>
    <property type="project" value="UniProtKB-UniRule"/>
</dbReference>
<dbReference type="GO" id="GO:0006310">
    <property type="term" value="P:DNA recombination"/>
    <property type="evidence" value="ECO:0000318"/>
    <property type="project" value="GO_Central"/>
</dbReference>
<dbReference type="GO" id="GO:0006281">
    <property type="term" value="P:DNA repair"/>
    <property type="evidence" value="ECO:0000318"/>
    <property type="project" value="GO_Central"/>
</dbReference>
<dbReference type="GO" id="GO:0006265">
    <property type="term" value="P:DNA topological change"/>
    <property type="evidence" value="ECO:0000318"/>
    <property type="project" value="GO_Central"/>
</dbReference>
<dbReference type="CDD" id="cd00186">
    <property type="entry name" value="TOP1Ac"/>
    <property type="match status" value="1"/>
</dbReference>
<dbReference type="CDD" id="cd03362">
    <property type="entry name" value="TOPRIM_TopoIA_TopoIII"/>
    <property type="match status" value="1"/>
</dbReference>
<dbReference type="Gene3D" id="3.40.50.140">
    <property type="match status" value="1"/>
</dbReference>
<dbReference type="Gene3D" id="1.10.460.10">
    <property type="entry name" value="Topoisomerase I, domain 2"/>
    <property type="match status" value="1"/>
</dbReference>
<dbReference type="Gene3D" id="2.70.20.10">
    <property type="entry name" value="Topoisomerase I, domain 3"/>
    <property type="match status" value="1"/>
</dbReference>
<dbReference type="Gene3D" id="1.10.290.10">
    <property type="entry name" value="Topoisomerase I, domain 4"/>
    <property type="match status" value="1"/>
</dbReference>
<dbReference type="HAMAP" id="MF_00953">
    <property type="entry name" value="Topoisom_3_prok"/>
    <property type="match status" value="1"/>
</dbReference>
<dbReference type="InterPro" id="IPR000380">
    <property type="entry name" value="Topo_IA"/>
</dbReference>
<dbReference type="InterPro" id="IPR003601">
    <property type="entry name" value="Topo_IA_2"/>
</dbReference>
<dbReference type="InterPro" id="IPR023406">
    <property type="entry name" value="Topo_IA_AS"/>
</dbReference>
<dbReference type="InterPro" id="IPR013497">
    <property type="entry name" value="Topo_IA_cen"/>
</dbReference>
<dbReference type="InterPro" id="IPR013824">
    <property type="entry name" value="Topo_IA_cen_sub1"/>
</dbReference>
<dbReference type="InterPro" id="IPR013825">
    <property type="entry name" value="Topo_IA_cen_sub2"/>
</dbReference>
<dbReference type="InterPro" id="IPR013826">
    <property type="entry name" value="Topo_IA_cen_sub3"/>
</dbReference>
<dbReference type="InterPro" id="IPR023405">
    <property type="entry name" value="Topo_IA_core_domain"/>
</dbReference>
<dbReference type="InterPro" id="IPR003602">
    <property type="entry name" value="Topo_IA_DNA-bd_dom"/>
</dbReference>
<dbReference type="InterPro" id="IPR005738">
    <property type="entry name" value="TopoIII"/>
</dbReference>
<dbReference type="InterPro" id="IPR006171">
    <property type="entry name" value="TOPRIM_dom"/>
</dbReference>
<dbReference type="InterPro" id="IPR034144">
    <property type="entry name" value="TOPRIM_TopoIII"/>
</dbReference>
<dbReference type="NCBIfam" id="NF005829">
    <property type="entry name" value="PRK07726.1"/>
    <property type="match status" value="1"/>
</dbReference>
<dbReference type="NCBIfam" id="TIGR01056">
    <property type="entry name" value="topB"/>
    <property type="match status" value="1"/>
</dbReference>
<dbReference type="PANTHER" id="PTHR11390:SF21">
    <property type="entry name" value="DNA TOPOISOMERASE 3-ALPHA"/>
    <property type="match status" value="1"/>
</dbReference>
<dbReference type="PANTHER" id="PTHR11390">
    <property type="entry name" value="PROKARYOTIC DNA TOPOISOMERASE"/>
    <property type="match status" value="1"/>
</dbReference>
<dbReference type="Pfam" id="PF01131">
    <property type="entry name" value="Topoisom_bac"/>
    <property type="match status" value="1"/>
</dbReference>
<dbReference type="Pfam" id="PF01751">
    <property type="entry name" value="Toprim"/>
    <property type="match status" value="1"/>
</dbReference>
<dbReference type="PRINTS" id="PR00417">
    <property type="entry name" value="PRTPISMRASEI"/>
</dbReference>
<dbReference type="SMART" id="SM00437">
    <property type="entry name" value="TOP1Ac"/>
    <property type="match status" value="1"/>
</dbReference>
<dbReference type="SMART" id="SM00436">
    <property type="entry name" value="TOP1Bc"/>
    <property type="match status" value="1"/>
</dbReference>
<dbReference type="SMART" id="SM00493">
    <property type="entry name" value="TOPRIM"/>
    <property type="match status" value="1"/>
</dbReference>
<dbReference type="SUPFAM" id="SSF56712">
    <property type="entry name" value="Prokaryotic type I DNA topoisomerase"/>
    <property type="match status" value="1"/>
</dbReference>
<dbReference type="PROSITE" id="PS00396">
    <property type="entry name" value="TOPO_IA_1"/>
    <property type="match status" value="1"/>
</dbReference>
<dbReference type="PROSITE" id="PS52039">
    <property type="entry name" value="TOPO_IA_2"/>
    <property type="match status" value="1"/>
</dbReference>
<dbReference type="PROSITE" id="PS50880">
    <property type="entry name" value="TOPRIM"/>
    <property type="match status" value="1"/>
</dbReference>
<gene>
    <name evidence="1" type="primary">topB</name>
    <name type="ordered locus">BC_0417</name>
</gene>
<protein>
    <recommendedName>
        <fullName evidence="1">DNA topoisomerase 3</fullName>
        <ecNumber evidence="1">5.6.2.1</ecNumber>
    </recommendedName>
    <alternativeName>
        <fullName evidence="1">DNA topoisomerase III</fullName>
    </alternativeName>
</protein>
<accession>Q81IH1</accession>
<evidence type="ECO:0000255" key="1">
    <source>
        <dbReference type="HAMAP-Rule" id="MF_00953"/>
    </source>
</evidence>
<evidence type="ECO:0000255" key="2">
    <source>
        <dbReference type="PROSITE-ProRule" id="PRU01383"/>
    </source>
</evidence>
<evidence type="ECO:0000256" key="3">
    <source>
        <dbReference type="SAM" id="MobiDB-lite"/>
    </source>
</evidence>
<feature type="chain" id="PRO_0000286361" description="DNA topoisomerase 3">
    <location>
        <begin position="1"/>
        <end position="729"/>
    </location>
</feature>
<feature type="domain" description="Toprim" evidence="1">
    <location>
        <begin position="3"/>
        <end position="136"/>
    </location>
</feature>
<feature type="domain" description="Topo IA-type catalytic" evidence="2">
    <location>
        <begin position="153"/>
        <end position="594"/>
    </location>
</feature>
<feature type="region of interest" description="Interaction with DNA" evidence="1">
    <location>
        <begin position="187"/>
        <end position="192"/>
    </location>
</feature>
<feature type="region of interest" description="Disordered" evidence="3">
    <location>
        <begin position="686"/>
        <end position="719"/>
    </location>
</feature>
<feature type="compositionally biased region" description="Basic and acidic residues" evidence="3">
    <location>
        <begin position="686"/>
        <end position="713"/>
    </location>
</feature>
<feature type="active site" description="O-(5'-phospho-DNA)-tyrosine intermediate" evidence="2">
    <location>
        <position position="310"/>
    </location>
</feature>
<feature type="binding site" evidence="1">
    <location>
        <position position="9"/>
    </location>
    <ligand>
        <name>Mg(2+)</name>
        <dbReference type="ChEBI" id="CHEBI:18420"/>
        <note>catalytic</note>
    </ligand>
</feature>
<feature type="binding site" evidence="1">
    <location>
        <position position="105"/>
    </location>
    <ligand>
        <name>Mg(2+)</name>
        <dbReference type="ChEBI" id="CHEBI:18420"/>
        <note>catalytic</note>
    </ligand>
</feature>
<feature type="site" description="Interaction with DNA" evidence="1">
    <location>
        <position position="61"/>
    </location>
</feature>
<feature type="site" description="Interaction with DNA" evidence="1">
    <location>
        <position position="168"/>
    </location>
</feature>
<feature type="site" description="Interaction with DNA" evidence="1">
    <location>
        <position position="176"/>
    </location>
</feature>
<feature type="site" description="Interaction with DNA" evidence="1">
    <location>
        <position position="312"/>
    </location>
</feature>
<proteinExistence type="inferred from homology"/>
<keyword id="KW-0238">DNA-binding</keyword>
<keyword id="KW-0413">Isomerase</keyword>
<keyword id="KW-0460">Magnesium</keyword>
<keyword id="KW-0479">Metal-binding</keyword>
<keyword id="KW-1185">Reference proteome</keyword>
<keyword id="KW-0799">Topoisomerase</keyword>
<comment type="function">
    <text evidence="1">Releases the supercoiling and torsional tension of DNA, which is introduced during the DNA replication and transcription, by transiently cleaving and rejoining one strand of the DNA duplex. Introduces a single-strand break via transesterification at a target site in duplex DNA. The scissile phosphodiester is attacked by the catalytic tyrosine of the enzyme, resulting in the formation of a DNA-(5'-phosphotyrosyl)-enzyme intermediate and the expulsion of a 3'-OH DNA strand. The free DNA strand then undergoes passage around the unbroken strand, thus removing DNA supercoils. Finally, in the religation step, the DNA 3'-OH attacks the covalent intermediate to expel the active-site tyrosine and restore the DNA phosphodiester backbone.</text>
</comment>
<comment type="catalytic activity">
    <reaction evidence="1">
        <text>ATP-independent breakage of single-stranded DNA, followed by passage and rejoining.</text>
        <dbReference type="EC" id="5.6.2.1"/>
    </reaction>
</comment>
<comment type="cofactor">
    <cofactor evidence="1">
        <name>Mg(2+)</name>
        <dbReference type="ChEBI" id="CHEBI:18420"/>
    </cofactor>
</comment>
<comment type="similarity">
    <text evidence="1 2">Belongs to the type IA topoisomerase family.</text>
</comment>
<organism>
    <name type="scientific">Bacillus cereus (strain ATCC 14579 / DSM 31 / CCUG 7414 / JCM 2152 / NBRC 15305 / NCIMB 9373 / NCTC 2599 / NRRL B-3711)</name>
    <dbReference type="NCBI Taxonomy" id="226900"/>
    <lineage>
        <taxon>Bacteria</taxon>
        <taxon>Bacillati</taxon>
        <taxon>Bacillota</taxon>
        <taxon>Bacilli</taxon>
        <taxon>Bacillales</taxon>
        <taxon>Bacillaceae</taxon>
        <taxon>Bacillus</taxon>
        <taxon>Bacillus cereus group</taxon>
    </lineage>
</organism>